<sequence>MGKVIGIDLGTTNSCVAVMDGKSAKVIENAEGMRTTPSIVAITDDGERLVGQPAKRQAVTNPERTFFAVKRLIGRRYDDPMVEKDKGLVPYKIVKASNGDAWVEADGKTYSPSQVSAFILQKMKETAEAHLGQKVDQAVITVPAYFNDAQRQATKDAGKIAGLEVLRIINEPTAAALAYGLDKAKTGTIAVYDLGGGTFDVSILEIGDGVFEVKSTNGDTFLGGEDFDMRLVNYLADEFQKEQGIDLRKDKLALQRLKEAAEKAKIELSSTTQTEINLPFITADQSGPKHLTMKLTRAKFEALVDDLVQKTIEPCRKALKDAGLTAGEISEVVLVGGMTRMPKVQEVVKQLFGKEPHKGVNPDEVVAIGAAIQAGVLQGDVKDVLLLDVTPLSLGIETLGGVFTRIIDRNTTIPTKKSQVFSTAEDNQNAVTIRVFQGEREMAADNKMLGQFDLMGIPPAPRGMPQIEVTFDIDANGIVNVSAKDKATGKEQQIRIQASGGLSDSEIDKMVKDAEANAAEDKKRREAVDAKNHADALVHSTEKALAEHGSKIDEGERRSIEDALSDLREALKGDDAEAIKTKSNTLAQASMKLGEAMYKQAEAGGAAQQAGKDDVVDAEFTEVDDDKKKSA</sequence>
<accession>O05700</accession>
<protein>
    <recommendedName>
        <fullName>Chaperone protein DnaK</fullName>
    </recommendedName>
    <alternativeName>
        <fullName>HSP70</fullName>
    </alternativeName>
    <alternativeName>
        <fullName>Heat shock 70 kDa protein</fullName>
    </alternativeName>
    <alternativeName>
        <fullName>Heat shock protein 70</fullName>
    </alternativeName>
</protein>
<organism>
    <name type="scientific">Rhodopseudomonas sp. (strain No.7)</name>
    <dbReference type="NCBI Taxonomy" id="269092"/>
    <lineage>
        <taxon>Bacteria</taxon>
        <taxon>Pseudomonadati</taxon>
        <taxon>Pseudomonadota</taxon>
        <taxon>Alphaproteobacteria</taxon>
        <taxon>Hyphomicrobiales</taxon>
        <taxon>Nitrobacteraceae</taxon>
        <taxon>Rhodopseudomonas</taxon>
    </lineage>
</organism>
<proteinExistence type="inferred from homology"/>
<keyword id="KW-0067">ATP-binding</keyword>
<keyword id="KW-0143">Chaperone</keyword>
<keyword id="KW-0547">Nucleotide-binding</keyword>
<keyword id="KW-0597">Phosphoprotein</keyword>
<keyword id="KW-0346">Stress response</keyword>
<gene>
    <name type="primary">dnaK</name>
</gene>
<dbReference type="EMBL" id="D78133">
    <property type="protein sequence ID" value="BAA19796.1"/>
    <property type="molecule type" value="Genomic_DNA"/>
</dbReference>
<dbReference type="SMR" id="O05700"/>
<dbReference type="GO" id="GO:0005524">
    <property type="term" value="F:ATP binding"/>
    <property type="evidence" value="ECO:0007669"/>
    <property type="project" value="UniProtKB-UniRule"/>
</dbReference>
<dbReference type="GO" id="GO:0140662">
    <property type="term" value="F:ATP-dependent protein folding chaperone"/>
    <property type="evidence" value="ECO:0007669"/>
    <property type="project" value="InterPro"/>
</dbReference>
<dbReference type="GO" id="GO:0051082">
    <property type="term" value="F:unfolded protein binding"/>
    <property type="evidence" value="ECO:0007669"/>
    <property type="project" value="InterPro"/>
</dbReference>
<dbReference type="CDD" id="cd11733">
    <property type="entry name" value="ASKHA_NBD_HSP70_HSPA9"/>
    <property type="match status" value="1"/>
</dbReference>
<dbReference type="FunFam" id="2.60.34.10:FF:000014">
    <property type="entry name" value="Chaperone protein DnaK HSP70"/>
    <property type="match status" value="1"/>
</dbReference>
<dbReference type="FunFam" id="3.30.420.40:FF:000020">
    <property type="entry name" value="Chaperone protein HscA homolog"/>
    <property type="match status" value="1"/>
</dbReference>
<dbReference type="FunFam" id="3.30.30.30:FF:000003">
    <property type="entry name" value="Heat shock protein 9"/>
    <property type="match status" value="1"/>
</dbReference>
<dbReference type="FunFam" id="1.20.1270.10:FF:000001">
    <property type="entry name" value="Molecular chaperone DnaK"/>
    <property type="match status" value="1"/>
</dbReference>
<dbReference type="FunFam" id="3.30.420.40:FF:000004">
    <property type="entry name" value="Molecular chaperone DnaK"/>
    <property type="match status" value="1"/>
</dbReference>
<dbReference type="FunFam" id="3.90.640.10:FF:000003">
    <property type="entry name" value="Molecular chaperone DnaK"/>
    <property type="match status" value="1"/>
</dbReference>
<dbReference type="Gene3D" id="1.20.1270.10">
    <property type="match status" value="1"/>
</dbReference>
<dbReference type="Gene3D" id="3.30.420.40">
    <property type="match status" value="2"/>
</dbReference>
<dbReference type="Gene3D" id="3.90.640.10">
    <property type="entry name" value="Actin, Chain A, domain 4"/>
    <property type="match status" value="1"/>
</dbReference>
<dbReference type="Gene3D" id="2.60.34.10">
    <property type="entry name" value="Substrate Binding Domain Of DNAk, Chain A, domain 1"/>
    <property type="match status" value="1"/>
</dbReference>
<dbReference type="HAMAP" id="MF_00332">
    <property type="entry name" value="DnaK"/>
    <property type="match status" value="1"/>
</dbReference>
<dbReference type="InterPro" id="IPR043129">
    <property type="entry name" value="ATPase_NBD"/>
</dbReference>
<dbReference type="InterPro" id="IPR012725">
    <property type="entry name" value="Chaperone_DnaK"/>
</dbReference>
<dbReference type="InterPro" id="IPR018181">
    <property type="entry name" value="Heat_shock_70_CS"/>
</dbReference>
<dbReference type="InterPro" id="IPR029048">
    <property type="entry name" value="HSP70_C_sf"/>
</dbReference>
<dbReference type="InterPro" id="IPR029047">
    <property type="entry name" value="HSP70_peptide-bd_sf"/>
</dbReference>
<dbReference type="InterPro" id="IPR013126">
    <property type="entry name" value="Hsp_70_fam"/>
</dbReference>
<dbReference type="NCBIfam" id="NF001413">
    <property type="entry name" value="PRK00290.1"/>
    <property type="match status" value="1"/>
</dbReference>
<dbReference type="NCBIfam" id="NF003520">
    <property type="entry name" value="PRK05183.1"/>
    <property type="match status" value="1"/>
</dbReference>
<dbReference type="NCBIfam" id="TIGR02350">
    <property type="entry name" value="prok_dnaK"/>
    <property type="match status" value="1"/>
</dbReference>
<dbReference type="PANTHER" id="PTHR19375">
    <property type="entry name" value="HEAT SHOCK PROTEIN 70KDA"/>
    <property type="match status" value="1"/>
</dbReference>
<dbReference type="Pfam" id="PF00012">
    <property type="entry name" value="HSP70"/>
    <property type="match status" value="1"/>
</dbReference>
<dbReference type="PRINTS" id="PR00301">
    <property type="entry name" value="HEATSHOCK70"/>
</dbReference>
<dbReference type="SUPFAM" id="SSF53067">
    <property type="entry name" value="Actin-like ATPase domain"/>
    <property type="match status" value="2"/>
</dbReference>
<dbReference type="SUPFAM" id="SSF100934">
    <property type="entry name" value="Heat shock protein 70kD (HSP70), C-terminal subdomain"/>
    <property type="match status" value="1"/>
</dbReference>
<dbReference type="SUPFAM" id="SSF100920">
    <property type="entry name" value="Heat shock protein 70kD (HSP70), peptide-binding domain"/>
    <property type="match status" value="1"/>
</dbReference>
<dbReference type="PROSITE" id="PS00297">
    <property type="entry name" value="HSP70_1"/>
    <property type="match status" value="1"/>
</dbReference>
<dbReference type="PROSITE" id="PS00329">
    <property type="entry name" value="HSP70_2"/>
    <property type="match status" value="1"/>
</dbReference>
<dbReference type="PROSITE" id="PS01036">
    <property type="entry name" value="HSP70_3"/>
    <property type="match status" value="1"/>
</dbReference>
<name>DNAK_RHOS7</name>
<comment type="function">
    <text evidence="1">Acts as a chaperone.</text>
</comment>
<comment type="induction">
    <text evidence="1">By stress conditions e.g. heat shock (By similarity).</text>
</comment>
<comment type="similarity">
    <text evidence="3">Belongs to the heat shock protein 70 family.</text>
</comment>
<feature type="chain" id="PRO_0000078528" description="Chaperone protein DnaK">
    <location>
        <begin position="1"/>
        <end position="631"/>
    </location>
</feature>
<feature type="region of interest" description="Disordered" evidence="2">
    <location>
        <begin position="517"/>
        <end position="536"/>
    </location>
</feature>
<feature type="modified residue" description="Phosphothreonine; by autocatalysis" evidence="1">
    <location>
        <position position="198"/>
    </location>
</feature>
<evidence type="ECO:0000250" key="1"/>
<evidence type="ECO:0000256" key="2">
    <source>
        <dbReference type="SAM" id="MobiDB-lite"/>
    </source>
</evidence>
<evidence type="ECO:0000305" key="3"/>
<reference key="1">
    <citation type="journal article" date="1997" name="Biochim. Biophys. Acta">
        <title>Cloning of dnaK and dnaJ homologous genes from a purple non-sulfur bacterium Rhodopseudomonas species.</title>
        <authorList>
            <person name="Momma K."/>
            <person name="Inui M."/>
            <person name="Yamagata H."/>
            <person name="Yukawa H."/>
        </authorList>
    </citation>
    <scope>NUCLEOTIDE SEQUENCE [GENOMIC DNA]</scope>
</reference>